<proteinExistence type="inferred from homology"/>
<protein>
    <recommendedName>
        <fullName evidence="1">Phosphoserine aminotransferase</fullName>
        <ecNumber evidence="1">2.6.1.52</ecNumber>
    </recommendedName>
    <alternativeName>
        <fullName evidence="1">Phosphohydroxythreonine aminotransferase</fullName>
        <shortName evidence="1">PSAT</shortName>
    </alternativeName>
</protein>
<name>SERC_RHOBA</name>
<evidence type="ECO:0000255" key="1">
    <source>
        <dbReference type="HAMAP-Rule" id="MF_00160"/>
    </source>
</evidence>
<evidence type="ECO:0000305" key="2"/>
<dbReference type="EC" id="2.6.1.52" evidence="1"/>
<dbReference type="EMBL" id="BX294143">
    <property type="protein sequence ID" value="CAD74688.1"/>
    <property type="status" value="ALT_INIT"/>
    <property type="molecule type" value="Genomic_DNA"/>
</dbReference>
<dbReference type="RefSeq" id="NP_867143.1">
    <property type="nucleotide sequence ID" value="NC_005027.1"/>
</dbReference>
<dbReference type="RefSeq" id="WP_011120822.1">
    <property type="nucleotide sequence ID" value="NC_005027.1"/>
</dbReference>
<dbReference type="SMR" id="Q7UQL3"/>
<dbReference type="FunCoup" id="Q7UQL3">
    <property type="interactions" value="435"/>
</dbReference>
<dbReference type="STRING" id="243090.RB6246"/>
<dbReference type="EnsemblBacteria" id="CAD74688">
    <property type="protein sequence ID" value="CAD74688"/>
    <property type="gene ID" value="RB6246"/>
</dbReference>
<dbReference type="KEGG" id="rba:RB6246"/>
<dbReference type="PATRIC" id="fig|243090.15.peg.3010"/>
<dbReference type="eggNOG" id="COG1932">
    <property type="taxonomic scope" value="Bacteria"/>
</dbReference>
<dbReference type="HOGENOM" id="CLU_034866_0_2_0"/>
<dbReference type="InParanoid" id="Q7UQL3"/>
<dbReference type="OrthoDB" id="9809412at2"/>
<dbReference type="UniPathway" id="UPA00135">
    <property type="reaction ID" value="UER00197"/>
</dbReference>
<dbReference type="UniPathway" id="UPA00244">
    <property type="reaction ID" value="UER00311"/>
</dbReference>
<dbReference type="Proteomes" id="UP000001025">
    <property type="component" value="Chromosome"/>
</dbReference>
<dbReference type="GO" id="GO:0005737">
    <property type="term" value="C:cytoplasm"/>
    <property type="evidence" value="ECO:0000318"/>
    <property type="project" value="GO_Central"/>
</dbReference>
<dbReference type="GO" id="GO:0004648">
    <property type="term" value="F:O-phospho-L-serine:2-oxoglutarate aminotransferase activity"/>
    <property type="evidence" value="ECO:0000318"/>
    <property type="project" value="GO_Central"/>
</dbReference>
<dbReference type="GO" id="GO:0030170">
    <property type="term" value="F:pyridoxal phosphate binding"/>
    <property type="evidence" value="ECO:0000318"/>
    <property type="project" value="GO_Central"/>
</dbReference>
<dbReference type="GO" id="GO:0006564">
    <property type="term" value="P:L-serine biosynthetic process"/>
    <property type="evidence" value="ECO:0000318"/>
    <property type="project" value="GO_Central"/>
</dbReference>
<dbReference type="GO" id="GO:0008615">
    <property type="term" value="P:pyridoxine biosynthetic process"/>
    <property type="evidence" value="ECO:0007669"/>
    <property type="project" value="UniProtKB-UniRule"/>
</dbReference>
<dbReference type="FunFam" id="3.40.640.10:FF:000010">
    <property type="entry name" value="Phosphoserine aminotransferase"/>
    <property type="match status" value="1"/>
</dbReference>
<dbReference type="FunFam" id="3.90.1150.10:FF:000006">
    <property type="entry name" value="Phosphoserine aminotransferase"/>
    <property type="match status" value="1"/>
</dbReference>
<dbReference type="Gene3D" id="3.90.1150.10">
    <property type="entry name" value="Aspartate Aminotransferase, domain 1"/>
    <property type="match status" value="1"/>
</dbReference>
<dbReference type="Gene3D" id="3.40.640.10">
    <property type="entry name" value="Type I PLP-dependent aspartate aminotransferase-like (Major domain)"/>
    <property type="match status" value="1"/>
</dbReference>
<dbReference type="HAMAP" id="MF_00160">
    <property type="entry name" value="SerC_aminotrans_5"/>
    <property type="match status" value="1"/>
</dbReference>
<dbReference type="InterPro" id="IPR000192">
    <property type="entry name" value="Aminotrans_V_dom"/>
</dbReference>
<dbReference type="InterPro" id="IPR020578">
    <property type="entry name" value="Aminotrans_V_PyrdxlP_BS"/>
</dbReference>
<dbReference type="InterPro" id="IPR022278">
    <property type="entry name" value="Pser_aminoTfrase"/>
</dbReference>
<dbReference type="InterPro" id="IPR015424">
    <property type="entry name" value="PyrdxlP-dep_Trfase"/>
</dbReference>
<dbReference type="InterPro" id="IPR015421">
    <property type="entry name" value="PyrdxlP-dep_Trfase_major"/>
</dbReference>
<dbReference type="InterPro" id="IPR015422">
    <property type="entry name" value="PyrdxlP-dep_Trfase_small"/>
</dbReference>
<dbReference type="NCBIfam" id="NF003764">
    <property type="entry name" value="PRK05355.1"/>
    <property type="match status" value="1"/>
</dbReference>
<dbReference type="NCBIfam" id="TIGR01364">
    <property type="entry name" value="serC_1"/>
    <property type="match status" value="1"/>
</dbReference>
<dbReference type="PANTHER" id="PTHR43247">
    <property type="entry name" value="PHOSPHOSERINE AMINOTRANSFERASE"/>
    <property type="match status" value="1"/>
</dbReference>
<dbReference type="PANTHER" id="PTHR43247:SF1">
    <property type="entry name" value="PHOSPHOSERINE AMINOTRANSFERASE"/>
    <property type="match status" value="1"/>
</dbReference>
<dbReference type="Pfam" id="PF00266">
    <property type="entry name" value="Aminotran_5"/>
    <property type="match status" value="1"/>
</dbReference>
<dbReference type="PIRSF" id="PIRSF000525">
    <property type="entry name" value="SerC"/>
    <property type="match status" value="1"/>
</dbReference>
<dbReference type="SUPFAM" id="SSF53383">
    <property type="entry name" value="PLP-dependent transferases"/>
    <property type="match status" value="1"/>
</dbReference>
<dbReference type="PROSITE" id="PS00595">
    <property type="entry name" value="AA_TRANSFER_CLASS_5"/>
    <property type="match status" value="1"/>
</dbReference>
<feature type="chain" id="PRO_0000150203" description="Phosphoserine aminotransferase">
    <location>
        <begin position="1"/>
        <end position="376"/>
    </location>
</feature>
<feature type="binding site" evidence="1">
    <location>
        <position position="54"/>
    </location>
    <ligand>
        <name>L-glutamate</name>
        <dbReference type="ChEBI" id="CHEBI:29985"/>
    </ligand>
</feature>
<feature type="binding site" evidence="1">
    <location>
        <begin position="88"/>
        <end position="89"/>
    </location>
    <ligand>
        <name>pyridoxal 5'-phosphate</name>
        <dbReference type="ChEBI" id="CHEBI:597326"/>
    </ligand>
</feature>
<feature type="binding site" evidence="1">
    <location>
        <position position="115"/>
    </location>
    <ligand>
        <name>pyridoxal 5'-phosphate</name>
        <dbReference type="ChEBI" id="CHEBI:597326"/>
    </ligand>
</feature>
<feature type="binding site" evidence="1">
    <location>
        <position position="165"/>
    </location>
    <ligand>
        <name>pyridoxal 5'-phosphate</name>
        <dbReference type="ChEBI" id="CHEBI:597326"/>
    </ligand>
</feature>
<feature type="binding site" evidence="1">
    <location>
        <position position="186"/>
    </location>
    <ligand>
        <name>pyridoxal 5'-phosphate</name>
        <dbReference type="ChEBI" id="CHEBI:597326"/>
    </ligand>
</feature>
<feature type="binding site" evidence="1">
    <location>
        <position position="209"/>
    </location>
    <ligand>
        <name>pyridoxal 5'-phosphate</name>
        <dbReference type="ChEBI" id="CHEBI:597326"/>
    </ligand>
</feature>
<feature type="binding site" evidence="1">
    <location>
        <begin position="251"/>
        <end position="252"/>
    </location>
    <ligand>
        <name>pyridoxal 5'-phosphate</name>
        <dbReference type="ChEBI" id="CHEBI:597326"/>
    </ligand>
</feature>
<feature type="modified residue" description="N6-(pyridoxal phosphate)lysine" evidence="1">
    <location>
        <position position="210"/>
    </location>
</feature>
<gene>
    <name evidence="1" type="primary">serC</name>
    <name type="ordered locus">RB6246</name>
</gene>
<reference key="1">
    <citation type="journal article" date="2003" name="Proc. Natl. Acad. Sci. U.S.A.">
        <title>Complete genome sequence of the marine planctomycete Pirellula sp. strain 1.</title>
        <authorList>
            <person name="Gloeckner F.O."/>
            <person name="Kube M."/>
            <person name="Bauer M."/>
            <person name="Teeling H."/>
            <person name="Lombardot T."/>
            <person name="Ludwig W."/>
            <person name="Gade D."/>
            <person name="Beck A."/>
            <person name="Borzym K."/>
            <person name="Heitmann K."/>
            <person name="Rabus R."/>
            <person name="Schlesner H."/>
            <person name="Amann R."/>
            <person name="Reinhardt R."/>
        </authorList>
    </citation>
    <scope>NUCLEOTIDE SEQUENCE [LARGE SCALE GENOMIC DNA]</scope>
    <source>
        <strain>DSM 10527 / NCIMB 13988 / SH1</strain>
    </source>
</reference>
<keyword id="KW-0028">Amino-acid biosynthesis</keyword>
<keyword id="KW-0032">Aminotransferase</keyword>
<keyword id="KW-0963">Cytoplasm</keyword>
<keyword id="KW-0663">Pyridoxal phosphate</keyword>
<keyword id="KW-0664">Pyridoxine biosynthesis</keyword>
<keyword id="KW-1185">Reference proteome</keyword>
<keyword id="KW-0718">Serine biosynthesis</keyword>
<keyword id="KW-0808">Transferase</keyword>
<comment type="function">
    <text evidence="1">Catalyzes the reversible conversion of 3-phosphohydroxypyruvate to phosphoserine and of 3-hydroxy-2-oxo-4-phosphonooxybutanoate to phosphohydroxythreonine.</text>
</comment>
<comment type="catalytic activity">
    <reaction evidence="1">
        <text>O-phospho-L-serine + 2-oxoglutarate = 3-phosphooxypyruvate + L-glutamate</text>
        <dbReference type="Rhea" id="RHEA:14329"/>
        <dbReference type="ChEBI" id="CHEBI:16810"/>
        <dbReference type="ChEBI" id="CHEBI:18110"/>
        <dbReference type="ChEBI" id="CHEBI:29985"/>
        <dbReference type="ChEBI" id="CHEBI:57524"/>
        <dbReference type="EC" id="2.6.1.52"/>
    </reaction>
</comment>
<comment type="catalytic activity">
    <reaction evidence="1">
        <text>4-(phosphooxy)-L-threonine + 2-oxoglutarate = (R)-3-hydroxy-2-oxo-4-phosphooxybutanoate + L-glutamate</text>
        <dbReference type="Rhea" id="RHEA:16573"/>
        <dbReference type="ChEBI" id="CHEBI:16810"/>
        <dbReference type="ChEBI" id="CHEBI:29985"/>
        <dbReference type="ChEBI" id="CHEBI:58452"/>
        <dbReference type="ChEBI" id="CHEBI:58538"/>
        <dbReference type="EC" id="2.6.1.52"/>
    </reaction>
</comment>
<comment type="cofactor">
    <cofactor evidence="1">
        <name>pyridoxal 5'-phosphate</name>
        <dbReference type="ChEBI" id="CHEBI:597326"/>
    </cofactor>
    <text evidence="1">Binds 1 pyridoxal phosphate per subunit.</text>
</comment>
<comment type="pathway">
    <text evidence="1">Amino-acid biosynthesis; L-serine biosynthesis; L-serine from 3-phospho-D-glycerate: step 2/3.</text>
</comment>
<comment type="pathway">
    <text evidence="1">Cofactor biosynthesis; pyridoxine 5'-phosphate biosynthesis; pyridoxine 5'-phosphate from D-erythrose 4-phosphate: step 3/5.</text>
</comment>
<comment type="subunit">
    <text evidence="1">Homodimer.</text>
</comment>
<comment type="subcellular location">
    <subcellularLocation>
        <location evidence="1">Cytoplasm</location>
    </subcellularLocation>
</comment>
<comment type="similarity">
    <text evidence="1">Belongs to the class-V pyridoxal-phosphate-dependent aminotransferase family. SerC subfamily.</text>
</comment>
<comment type="sequence caution" evidence="2">
    <conflict type="erroneous initiation">
        <sequence resource="EMBL-CDS" id="CAD74688"/>
    </conflict>
</comment>
<organism>
    <name type="scientific">Rhodopirellula baltica (strain DSM 10527 / NCIMB 13988 / SH1)</name>
    <dbReference type="NCBI Taxonomy" id="243090"/>
    <lineage>
        <taxon>Bacteria</taxon>
        <taxon>Pseudomonadati</taxon>
        <taxon>Planctomycetota</taxon>
        <taxon>Planctomycetia</taxon>
        <taxon>Pirellulales</taxon>
        <taxon>Pirellulaceae</taxon>
        <taxon>Rhodopirellula</taxon>
    </lineage>
</organism>
<sequence length="376" mass="41197">MQSTSAQSSASHPERVFNFSAGPATMPESVLREVQDEMLCYPGAGASIMEISHRDKLFVDVLHDAESTIRELLNVSDDYSVMFMQGGATLQFSAIPANLLRGSGKRAQYVLTGSWGKKAVKEAKKEGDVDVLFDAAESNYDHIPSASDLACPDDAAYMYYCSNETIQGVQFPTEPNCPDSVPLVSDASSDFLCRPLPIEKYGLLYACAQKNAGPAGVSVVIMRKDLLDKADPNIPGYLHFKNHHDNDSEWNTPPTFAIYVLGKVARWLRDDMGGLEKMESINHEKSQQLYSVIDSSNGFYRGHAQTDCRSLMNVTFNLPSDELTAKFIAEAAEHKLAALKGHRSVGGIRASIYNAMPREGVNALASFMNNFASKNS</sequence>
<accession>Q7UQL3</accession>